<organism>
    <name type="scientific">Homo sapiens</name>
    <name type="common">Human</name>
    <dbReference type="NCBI Taxonomy" id="9606"/>
    <lineage>
        <taxon>Eukaryota</taxon>
        <taxon>Metazoa</taxon>
        <taxon>Chordata</taxon>
        <taxon>Craniata</taxon>
        <taxon>Vertebrata</taxon>
        <taxon>Euteleostomi</taxon>
        <taxon>Mammalia</taxon>
        <taxon>Eutheria</taxon>
        <taxon>Euarchontoglires</taxon>
        <taxon>Primates</taxon>
        <taxon>Haplorrhini</taxon>
        <taxon>Catarrhini</taxon>
        <taxon>Hominidae</taxon>
        <taxon>Homo</taxon>
    </lineage>
</organism>
<comment type="function">
    <text evidence="1">Catalyzes the dephosphorylation of the nucleoside 5'-monophosphates deoxyadenosine monophosphate (dAMP), deoxycytidine monophosphate (dCMP), deoxyguanosine monophosphate (dGMP) and deoxythymidine monophosphate (dTMP).</text>
</comment>
<comment type="catalytic activity">
    <reaction evidence="1">
        <text>a 2'-deoxyribonucleoside 5'-phosphate + H2O = a 2'-deoxyribonucleoside + phosphate</text>
        <dbReference type="Rhea" id="RHEA:36167"/>
        <dbReference type="ChEBI" id="CHEBI:15377"/>
        <dbReference type="ChEBI" id="CHEBI:18274"/>
        <dbReference type="ChEBI" id="CHEBI:43474"/>
        <dbReference type="ChEBI" id="CHEBI:65317"/>
        <dbReference type="EC" id="3.1.3.89"/>
    </reaction>
</comment>
<comment type="cofactor">
    <cofactor evidence="1">
        <name>Mn(2+)</name>
        <dbReference type="ChEBI" id="CHEBI:29035"/>
    </cofactor>
    <cofactor evidence="1">
        <name>Co(2+)</name>
        <dbReference type="ChEBI" id="CHEBI:48828"/>
    </cofactor>
    <cofactor evidence="1">
        <name>Mg(2+)</name>
        <dbReference type="ChEBI" id="CHEBI:18420"/>
    </cofactor>
    <text evidence="1 3">Binds 2 divalent metal cations (Ref.9). Shows activity with Mn(2+), Co(2+) and Mg(2+) but shows no activity with Zn(2+) (By similarity).</text>
</comment>
<comment type="subunit">
    <text evidence="1">Homodimer.</text>
</comment>
<comment type="interaction">
    <interactant intactId="EBI-6163836">
        <id>Q7Z4H3</id>
    </interactant>
    <interactant intactId="EBI-81279">
        <id>Q9Y6K9</id>
        <label>IKBKG</label>
    </interactant>
    <organismsDiffer>false</organismsDiffer>
    <experiments>3</experiments>
</comment>
<comment type="interaction">
    <interactant intactId="EBI-6163836">
        <id>Q7Z4H3</id>
    </interactant>
    <interactant intactId="EBI-11911016">
        <id>P80188</id>
        <label>LCN2</label>
    </interactant>
    <organismsDiffer>false</organismsDiffer>
    <experiments>3</experiments>
</comment>
<comment type="interaction">
    <interactant intactId="EBI-6163836">
        <id>Q7Z4H3</id>
    </interactant>
    <interactant intactId="EBI-12219503">
        <id>P01189</id>
        <label>POMC</label>
    </interactant>
    <organismsDiffer>false</organismsDiffer>
    <experiments>3</experiments>
</comment>
<comment type="interaction">
    <interactant intactId="EBI-6163836">
        <id>Q7Z4H3</id>
    </interactant>
    <interactant intactId="EBI-6248077">
        <id>Q76353</id>
    </interactant>
    <organismsDiffer>true</organismsDiffer>
    <experiments>2</experiments>
</comment>
<comment type="alternative products">
    <event type="alternative splicing"/>
    <isoform>
        <id>Q7Z4H3-1</id>
        <name>1</name>
        <sequence type="displayed"/>
    </isoform>
    <isoform>
        <id>Q7Z4H3-2</id>
        <name>2</name>
        <sequence type="described" ref="VSP_029556"/>
    </isoform>
    <isoform>
        <id>Q7Z4H3-3</id>
        <name>3</name>
        <sequence type="described" ref="VSP_029557 VSP_029558"/>
    </isoform>
</comment>
<comment type="miscellaneous">
    <molecule>Isoform 3</molecule>
    <text evidence="6">May be produced at very low levels due to a premature stop codon in the mRNA, leading to nonsense-mediated mRNA decay.</text>
</comment>
<comment type="similarity">
    <text evidence="6">Belongs to the HDDC2 family.</text>
</comment>
<comment type="sequence caution" evidence="6">
    <conflict type="miscellaneous discrepancy">
        <sequence resource="EMBL-CDS" id="AAD34125"/>
    </conflict>
    <text>Correction of a non-canonical splice junction.</text>
</comment>
<comment type="sequence caution" evidence="6">
    <conflict type="erroneous initiation">
        <sequence resource="EMBL-CDS" id="AAH03357"/>
    </conflict>
    <text>Extended N-terminus.</text>
</comment>
<accession>Q7Z4H3</accession>
<accession>Q5TDQ4</accession>
<accession>Q6NZ49</accession>
<accession>Q9BTT2</accession>
<accession>Q9BV31</accession>
<accession>Q9Y3D1</accession>
<reference key="1">
    <citation type="journal article" date="2004" name="World J. Gastroenterol.">
        <title>Cloning and identification of NS5ATP2 gene and its spliced variant transactivated by hepatitis C virus non-structural protein 5A.</title>
        <authorList>
            <person name="Yang Q."/>
            <person name="Cheng J."/>
            <person name="Liu Y."/>
            <person name="Hong Y."/>
            <person name="Wang J.-J."/>
            <person name="Zhang S.-L."/>
        </authorList>
    </citation>
    <scope>NUCLEOTIDE SEQUENCE [MRNA] (ISOFORM 1)</scope>
    <source>
        <tissue>Hepatoma</tissue>
    </source>
</reference>
<reference key="2">
    <citation type="journal article" date="2000" name="Genome Res.">
        <title>Identification of novel human genes evolutionarily conserved in Caenorhabditis elegans by comparative proteomics.</title>
        <authorList>
            <person name="Lai C.-H."/>
            <person name="Chou C.-Y."/>
            <person name="Ch'ang L.-Y."/>
            <person name="Liu C.-S."/>
            <person name="Lin W.-C."/>
        </authorList>
    </citation>
    <scope>NUCLEOTIDE SEQUENCE [LARGE SCALE MRNA] (ISOFORM 3)</scope>
</reference>
<reference key="3">
    <citation type="journal article" date="2003" name="Nature">
        <title>The DNA sequence and analysis of human chromosome 6.</title>
        <authorList>
            <person name="Mungall A.J."/>
            <person name="Palmer S.A."/>
            <person name="Sims S.K."/>
            <person name="Edwards C.A."/>
            <person name="Ashurst J.L."/>
            <person name="Wilming L."/>
            <person name="Jones M.C."/>
            <person name="Horton R."/>
            <person name="Hunt S.E."/>
            <person name="Scott C.E."/>
            <person name="Gilbert J.G.R."/>
            <person name="Clamp M.E."/>
            <person name="Bethel G."/>
            <person name="Milne S."/>
            <person name="Ainscough R."/>
            <person name="Almeida J.P."/>
            <person name="Ambrose K.D."/>
            <person name="Andrews T.D."/>
            <person name="Ashwell R.I.S."/>
            <person name="Babbage A.K."/>
            <person name="Bagguley C.L."/>
            <person name="Bailey J."/>
            <person name="Banerjee R."/>
            <person name="Barker D.J."/>
            <person name="Barlow K.F."/>
            <person name="Bates K."/>
            <person name="Beare D.M."/>
            <person name="Beasley H."/>
            <person name="Beasley O."/>
            <person name="Bird C.P."/>
            <person name="Blakey S.E."/>
            <person name="Bray-Allen S."/>
            <person name="Brook J."/>
            <person name="Brown A.J."/>
            <person name="Brown J.Y."/>
            <person name="Burford D.C."/>
            <person name="Burrill W."/>
            <person name="Burton J."/>
            <person name="Carder C."/>
            <person name="Carter N.P."/>
            <person name="Chapman J.C."/>
            <person name="Clark S.Y."/>
            <person name="Clark G."/>
            <person name="Clee C.M."/>
            <person name="Clegg S."/>
            <person name="Cobley V."/>
            <person name="Collier R.E."/>
            <person name="Collins J.E."/>
            <person name="Colman L.K."/>
            <person name="Corby N.R."/>
            <person name="Coville G.J."/>
            <person name="Culley K.M."/>
            <person name="Dhami P."/>
            <person name="Davies J."/>
            <person name="Dunn M."/>
            <person name="Earthrowl M.E."/>
            <person name="Ellington A.E."/>
            <person name="Evans K.A."/>
            <person name="Faulkner L."/>
            <person name="Francis M.D."/>
            <person name="Frankish A."/>
            <person name="Frankland J."/>
            <person name="French L."/>
            <person name="Garner P."/>
            <person name="Garnett J."/>
            <person name="Ghori M.J."/>
            <person name="Gilby L.M."/>
            <person name="Gillson C.J."/>
            <person name="Glithero R.J."/>
            <person name="Grafham D.V."/>
            <person name="Grant M."/>
            <person name="Gribble S."/>
            <person name="Griffiths C."/>
            <person name="Griffiths M.N.D."/>
            <person name="Hall R."/>
            <person name="Halls K.S."/>
            <person name="Hammond S."/>
            <person name="Harley J.L."/>
            <person name="Hart E.A."/>
            <person name="Heath P.D."/>
            <person name="Heathcott R."/>
            <person name="Holmes S.J."/>
            <person name="Howden P.J."/>
            <person name="Howe K.L."/>
            <person name="Howell G.R."/>
            <person name="Huckle E."/>
            <person name="Humphray S.J."/>
            <person name="Humphries M.D."/>
            <person name="Hunt A.R."/>
            <person name="Johnson C.M."/>
            <person name="Joy A.A."/>
            <person name="Kay M."/>
            <person name="Keenan S.J."/>
            <person name="Kimberley A.M."/>
            <person name="King A."/>
            <person name="Laird G.K."/>
            <person name="Langford C."/>
            <person name="Lawlor S."/>
            <person name="Leongamornlert D.A."/>
            <person name="Leversha M."/>
            <person name="Lloyd C.R."/>
            <person name="Lloyd D.M."/>
            <person name="Loveland J.E."/>
            <person name="Lovell J."/>
            <person name="Martin S."/>
            <person name="Mashreghi-Mohammadi M."/>
            <person name="Maslen G.L."/>
            <person name="Matthews L."/>
            <person name="McCann O.T."/>
            <person name="McLaren S.J."/>
            <person name="McLay K."/>
            <person name="McMurray A."/>
            <person name="Moore M.J.F."/>
            <person name="Mullikin J.C."/>
            <person name="Niblett D."/>
            <person name="Nickerson T."/>
            <person name="Novik K.L."/>
            <person name="Oliver K."/>
            <person name="Overton-Larty E.K."/>
            <person name="Parker A."/>
            <person name="Patel R."/>
            <person name="Pearce A.V."/>
            <person name="Peck A.I."/>
            <person name="Phillimore B.J.C.T."/>
            <person name="Phillips S."/>
            <person name="Plumb R.W."/>
            <person name="Porter K.M."/>
            <person name="Ramsey Y."/>
            <person name="Ranby S.A."/>
            <person name="Rice C.M."/>
            <person name="Ross M.T."/>
            <person name="Searle S.M."/>
            <person name="Sehra H.K."/>
            <person name="Sheridan E."/>
            <person name="Skuce C.D."/>
            <person name="Smith S."/>
            <person name="Smith M."/>
            <person name="Spraggon L."/>
            <person name="Squares S.L."/>
            <person name="Steward C.A."/>
            <person name="Sycamore N."/>
            <person name="Tamlyn-Hall G."/>
            <person name="Tester J."/>
            <person name="Theaker A.J."/>
            <person name="Thomas D.W."/>
            <person name="Thorpe A."/>
            <person name="Tracey A."/>
            <person name="Tromans A."/>
            <person name="Tubby B."/>
            <person name="Wall M."/>
            <person name="Wallis J.M."/>
            <person name="West A.P."/>
            <person name="White S.S."/>
            <person name="Whitehead S.L."/>
            <person name="Whittaker H."/>
            <person name="Wild A."/>
            <person name="Willey D.J."/>
            <person name="Wilmer T.E."/>
            <person name="Wood J.M."/>
            <person name="Wray P.W."/>
            <person name="Wyatt J.C."/>
            <person name="Young L."/>
            <person name="Younger R.M."/>
            <person name="Bentley D.R."/>
            <person name="Coulson A."/>
            <person name="Durbin R.M."/>
            <person name="Hubbard T."/>
            <person name="Sulston J.E."/>
            <person name="Dunham I."/>
            <person name="Rogers J."/>
            <person name="Beck S."/>
        </authorList>
    </citation>
    <scope>NUCLEOTIDE SEQUENCE [LARGE SCALE GENOMIC DNA]</scope>
</reference>
<reference key="4">
    <citation type="submission" date="2005-07" db="EMBL/GenBank/DDBJ databases">
        <authorList>
            <person name="Mural R.J."/>
            <person name="Istrail S."/>
            <person name="Sutton G.G."/>
            <person name="Florea L."/>
            <person name="Halpern A.L."/>
            <person name="Mobarry C.M."/>
            <person name="Lippert R."/>
            <person name="Walenz B."/>
            <person name="Shatkay H."/>
            <person name="Dew I."/>
            <person name="Miller J.R."/>
            <person name="Flanigan M.J."/>
            <person name="Edwards N.J."/>
            <person name="Bolanos R."/>
            <person name="Fasulo D."/>
            <person name="Halldorsson B.V."/>
            <person name="Hannenhalli S."/>
            <person name="Turner R."/>
            <person name="Yooseph S."/>
            <person name="Lu F."/>
            <person name="Nusskern D.R."/>
            <person name="Shue B.C."/>
            <person name="Zheng X.H."/>
            <person name="Zhong F."/>
            <person name="Delcher A.L."/>
            <person name="Huson D.H."/>
            <person name="Kravitz S.A."/>
            <person name="Mouchard L."/>
            <person name="Reinert K."/>
            <person name="Remington K.A."/>
            <person name="Clark A.G."/>
            <person name="Waterman M.S."/>
            <person name="Eichler E.E."/>
            <person name="Adams M.D."/>
            <person name="Hunkapiller M.W."/>
            <person name="Myers E.W."/>
            <person name="Venter J.C."/>
        </authorList>
    </citation>
    <scope>NUCLEOTIDE SEQUENCE [LARGE SCALE GENOMIC DNA]</scope>
</reference>
<reference key="5">
    <citation type="journal article" date="2004" name="Genome Res.">
        <title>The status, quality, and expansion of the NIH full-length cDNA project: the Mammalian Gene Collection (MGC).</title>
        <authorList>
            <consortium name="The MGC Project Team"/>
        </authorList>
    </citation>
    <scope>NUCLEOTIDE SEQUENCE [LARGE SCALE MRNA] (ISOFORMS 1 AND 3)</scope>
    <source>
        <tissue>Brain</tissue>
        <tissue>Lung</tissue>
        <tissue>Placenta</tissue>
    </source>
</reference>
<reference key="6">
    <citation type="journal article" date="2009" name="Anal. Chem.">
        <title>Lys-N and trypsin cover complementary parts of the phosphoproteome in a refined SCX-based approach.</title>
        <authorList>
            <person name="Gauci S."/>
            <person name="Helbig A.O."/>
            <person name="Slijper M."/>
            <person name="Krijgsveld J."/>
            <person name="Heck A.J."/>
            <person name="Mohammed S."/>
        </authorList>
    </citation>
    <scope>ACETYLATION [LARGE SCALE ANALYSIS] AT ALA-2</scope>
    <scope>CLEAVAGE OF INITIATOR METHIONINE [LARGE SCALE ANALYSIS]</scope>
    <scope>IDENTIFICATION BY MASS SPECTROMETRY [LARGE SCALE ANALYSIS]</scope>
</reference>
<reference key="7">
    <citation type="journal article" date="2011" name="BMC Syst. Biol.">
        <title>Initial characterization of the human central proteome.</title>
        <authorList>
            <person name="Burkard T.R."/>
            <person name="Planyavsky M."/>
            <person name="Kaupe I."/>
            <person name="Breitwieser F.P."/>
            <person name="Buerckstuemmer T."/>
            <person name="Bennett K.L."/>
            <person name="Superti-Furga G."/>
            <person name="Colinge J."/>
        </authorList>
    </citation>
    <scope>IDENTIFICATION BY MASS SPECTROMETRY [LARGE SCALE ANALYSIS]</scope>
</reference>
<reference key="8">
    <citation type="journal article" date="2013" name="J. Proteome Res.">
        <title>Toward a comprehensive characterization of a human cancer cell phosphoproteome.</title>
        <authorList>
            <person name="Zhou H."/>
            <person name="Di Palma S."/>
            <person name="Preisinger C."/>
            <person name="Peng M."/>
            <person name="Polat A.N."/>
            <person name="Heck A.J."/>
            <person name="Mohammed S."/>
        </authorList>
    </citation>
    <scope>PHOSPHORYLATION [LARGE SCALE ANALYSIS] AT SER-3; SER-5 AND SER-204</scope>
    <scope>IDENTIFICATION BY MASS SPECTROMETRY [LARGE SCALE ANALYSIS]</scope>
    <source>
        <tissue>Erythroleukemia</tissue>
    </source>
</reference>
<reference key="9">
    <citation type="submission" date="2012-04" db="PDB data bank">
        <title>Northeast structural genomics consortium target HR6723.</title>
        <authorList>
            <consortium name="Northeast structural genomics consortium (NESG)"/>
        </authorList>
    </citation>
    <scope>X-RAY CRYSTALLOGRAPHY (1.9 ANGSTROMS) IN COMPLEX WITH MAGNESIUM</scope>
</reference>
<gene>
    <name type="primary">HDDC2</name>
    <name type="synonym">C6orf74</name>
    <name type="synonym">NS5ATP2</name>
    <name type="ORF">CGI-130</name>
</gene>
<keyword id="KW-0002">3D-structure</keyword>
<keyword id="KW-0007">Acetylation</keyword>
<keyword id="KW-0025">Alternative splicing</keyword>
<keyword id="KW-0170">Cobalt</keyword>
<keyword id="KW-0378">Hydrolase</keyword>
<keyword id="KW-0460">Magnesium</keyword>
<keyword id="KW-0464">Manganese</keyword>
<keyword id="KW-0479">Metal-binding</keyword>
<keyword id="KW-0597">Phosphoprotein</keyword>
<keyword id="KW-1267">Proteomics identification</keyword>
<keyword id="KW-1185">Reference proteome</keyword>
<sequence>MASVSSATFSGHGARSLLQFLRLVGQLKRVPRTGWVYRNVQRPESVSDHMYRMAVMAMVIKDDRLNKDRCVRLALVHDMAECIVGDIAPADNIPKEEKHRREEEAMKQITQLLPEDLRKELYELWEEYETQSSAEAKFVKQLDQCEMILQASEYEDLEHKPGRLQDFYDSTAGKFNHPEIVQLVSELEAERSTNIAAAASEPHS</sequence>
<name>HDDC2_HUMAN</name>
<dbReference type="EC" id="3.1.3.89" evidence="1"/>
<dbReference type="EMBL" id="AF529363">
    <property type="protein sequence ID" value="AAQ09597.1"/>
    <property type="molecule type" value="mRNA"/>
</dbReference>
<dbReference type="EMBL" id="AF151888">
    <property type="protein sequence ID" value="AAD34125.1"/>
    <property type="status" value="ALT_SEQ"/>
    <property type="molecule type" value="mRNA"/>
</dbReference>
<dbReference type="EMBL" id="AL121938">
    <property type="status" value="NOT_ANNOTATED_CDS"/>
    <property type="molecule type" value="Genomic_DNA"/>
</dbReference>
<dbReference type="EMBL" id="CH471051">
    <property type="protein sequence ID" value="EAW48138.1"/>
    <property type="molecule type" value="Genomic_DNA"/>
</dbReference>
<dbReference type="EMBL" id="BC001671">
    <property type="protein sequence ID" value="AAH01671.1"/>
    <property type="molecule type" value="mRNA"/>
</dbReference>
<dbReference type="EMBL" id="BC003357">
    <property type="protein sequence ID" value="AAH03357.2"/>
    <property type="status" value="ALT_INIT"/>
    <property type="molecule type" value="mRNA"/>
</dbReference>
<dbReference type="EMBL" id="BC066332">
    <property type="protein sequence ID" value="AAH66332.1"/>
    <property type="molecule type" value="mRNA"/>
</dbReference>
<dbReference type="CCDS" id="CCDS43503.1">
    <molecule id="Q7Z4H3-1"/>
</dbReference>
<dbReference type="RefSeq" id="NP_057147.2">
    <molecule id="Q7Z4H3-1"/>
    <property type="nucleotide sequence ID" value="NM_016063.3"/>
</dbReference>
<dbReference type="PDB" id="4DMB">
    <property type="method" value="X-ray"/>
    <property type="resolution" value="1.90 A"/>
    <property type="chains" value="A/B=1-204"/>
</dbReference>
<dbReference type="PDB" id="4L1J">
    <property type="method" value="X-ray"/>
    <property type="resolution" value="1.82 A"/>
    <property type="chains" value="A/B=1-204"/>
</dbReference>
<dbReference type="PDB" id="4L7E">
    <property type="method" value="X-ray"/>
    <property type="resolution" value="2.23 A"/>
    <property type="chains" value="A/B=1-204"/>
</dbReference>
<dbReference type="PDB" id="4L7W">
    <property type="method" value="X-ray"/>
    <property type="resolution" value="2.30 A"/>
    <property type="chains" value="A=1-204"/>
</dbReference>
<dbReference type="PDBsum" id="4DMB"/>
<dbReference type="PDBsum" id="4L1J"/>
<dbReference type="PDBsum" id="4L7E"/>
<dbReference type="PDBsum" id="4L7W"/>
<dbReference type="SMR" id="Q7Z4H3"/>
<dbReference type="BioGRID" id="119226">
    <property type="interactions" value="27"/>
</dbReference>
<dbReference type="FunCoup" id="Q7Z4H3">
    <property type="interactions" value="514"/>
</dbReference>
<dbReference type="IntAct" id="Q7Z4H3">
    <property type="interactions" value="10"/>
</dbReference>
<dbReference type="MINT" id="Q7Z4H3"/>
<dbReference type="STRING" id="9606.ENSP00000381220"/>
<dbReference type="GlyGen" id="Q7Z4H3">
    <property type="glycosylation" value="1 site, 1 O-linked glycan (1 site)"/>
</dbReference>
<dbReference type="iPTMnet" id="Q7Z4H3"/>
<dbReference type="PhosphoSitePlus" id="Q7Z4H3"/>
<dbReference type="BioMuta" id="HDDC2"/>
<dbReference type="DMDM" id="74713511"/>
<dbReference type="REPRODUCTION-2DPAGE" id="IPI00386751"/>
<dbReference type="jPOST" id="Q7Z4H3"/>
<dbReference type="MassIVE" id="Q7Z4H3"/>
<dbReference type="PaxDb" id="9606-ENSP00000381220"/>
<dbReference type="PeptideAtlas" id="Q7Z4H3"/>
<dbReference type="ProteomicsDB" id="69179">
    <molecule id="Q7Z4H3-1"/>
</dbReference>
<dbReference type="ProteomicsDB" id="69180">
    <molecule id="Q7Z4H3-2"/>
</dbReference>
<dbReference type="ProteomicsDB" id="69181">
    <molecule id="Q7Z4H3-3"/>
</dbReference>
<dbReference type="Pumba" id="Q7Z4H3"/>
<dbReference type="Antibodypedia" id="32696">
    <property type="antibodies" value="53 antibodies from 18 providers"/>
</dbReference>
<dbReference type="DNASU" id="51020"/>
<dbReference type="Ensembl" id="ENST00000318787.13">
    <molecule id="Q7Z4H3-3"/>
    <property type="protein sequence ID" value="ENSP00000316242.9"/>
    <property type="gene ID" value="ENSG00000111906.18"/>
</dbReference>
<dbReference type="Ensembl" id="ENST00000398153.7">
    <molecule id="Q7Z4H3-1"/>
    <property type="protein sequence ID" value="ENSP00000381220.1"/>
    <property type="gene ID" value="ENSG00000111906.18"/>
</dbReference>
<dbReference type="Ensembl" id="ENST00000609477.5">
    <molecule id="Q7Z4H3-3"/>
    <property type="protein sequence ID" value="ENSP00000476969.1"/>
    <property type="gene ID" value="ENSG00000111906.18"/>
</dbReference>
<dbReference type="GeneID" id="51020"/>
<dbReference type="KEGG" id="hsa:51020"/>
<dbReference type="MANE-Select" id="ENST00000398153.7">
    <property type="protein sequence ID" value="ENSP00000381220.1"/>
    <property type="RefSeq nucleotide sequence ID" value="NM_016063.3"/>
    <property type="RefSeq protein sequence ID" value="NP_057147.2"/>
</dbReference>
<dbReference type="UCSC" id="uc003qaa.2">
    <molecule id="Q7Z4H3-1"/>
    <property type="organism name" value="human"/>
</dbReference>
<dbReference type="AGR" id="HGNC:21078"/>
<dbReference type="CTD" id="51020"/>
<dbReference type="DisGeNET" id="51020"/>
<dbReference type="GeneCards" id="HDDC2"/>
<dbReference type="HGNC" id="HGNC:21078">
    <property type="gene designation" value="HDDC2"/>
</dbReference>
<dbReference type="HPA" id="ENSG00000111906">
    <property type="expression patterns" value="Low tissue specificity"/>
</dbReference>
<dbReference type="neXtProt" id="NX_Q7Z4H3"/>
<dbReference type="OpenTargets" id="ENSG00000111906"/>
<dbReference type="PharmGKB" id="PA134943525"/>
<dbReference type="VEuPathDB" id="HostDB:ENSG00000111906"/>
<dbReference type="eggNOG" id="KOG3197">
    <property type="taxonomic scope" value="Eukaryota"/>
</dbReference>
<dbReference type="GeneTree" id="ENSGT00390000009937"/>
<dbReference type="HOGENOM" id="CLU_2739334_0_0_1"/>
<dbReference type="InParanoid" id="Q7Z4H3"/>
<dbReference type="OMA" id="TWRLCLM"/>
<dbReference type="OrthoDB" id="10254258at2759"/>
<dbReference type="PAN-GO" id="Q7Z4H3">
    <property type="GO annotations" value="1 GO annotation based on evolutionary models"/>
</dbReference>
<dbReference type="PhylomeDB" id="Q7Z4H3"/>
<dbReference type="TreeFam" id="TF313855"/>
<dbReference type="PathwayCommons" id="Q7Z4H3"/>
<dbReference type="SignaLink" id="Q7Z4H3"/>
<dbReference type="BioGRID-ORCS" id="51020">
    <property type="hits" value="21 hits in 1152 CRISPR screens"/>
</dbReference>
<dbReference type="ChiTaRS" id="HDDC2">
    <property type="organism name" value="human"/>
</dbReference>
<dbReference type="EvolutionaryTrace" id="Q7Z4H3"/>
<dbReference type="GenomeRNAi" id="51020"/>
<dbReference type="Pharos" id="Q7Z4H3">
    <property type="development level" value="Tdark"/>
</dbReference>
<dbReference type="PRO" id="PR:Q7Z4H3"/>
<dbReference type="Proteomes" id="UP000005640">
    <property type="component" value="Chromosome 6"/>
</dbReference>
<dbReference type="RNAct" id="Q7Z4H3">
    <property type="molecule type" value="protein"/>
</dbReference>
<dbReference type="Bgee" id="ENSG00000111906">
    <property type="expression patterns" value="Expressed in pons and 216 other cell types or tissues"/>
</dbReference>
<dbReference type="ExpressionAtlas" id="Q7Z4H3">
    <property type="expression patterns" value="baseline and differential"/>
</dbReference>
<dbReference type="GO" id="GO:0002953">
    <property type="term" value="F:5'-deoxynucleotidase activity"/>
    <property type="evidence" value="ECO:0000318"/>
    <property type="project" value="GO_Central"/>
</dbReference>
<dbReference type="GO" id="GO:0046872">
    <property type="term" value="F:metal ion binding"/>
    <property type="evidence" value="ECO:0007669"/>
    <property type="project" value="UniProtKB-KW"/>
</dbReference>
<dbReference type="FunFam" id="1.10.3210.10:FF:000011">
    <property type="entry name" value="HD domain-containing protein 2"/>
    <property type="match status" value="1"/>
</dbReference>
<dbReference type="Gene3D" id="1.10.3210.10">
    <property type="entry name" value="Hypothetical protein af1432"/>
    <property type="match status" value="1"/>
</dbReference>
<dbReference type="InterPro" id="IPR003607">
    <property type="entry name" value="HD/PDEase_dom"/>
</dbReference>
<dbReference type="InterPro" id="IPR006674">
    <property type="entry name" value="HD_domain"/>
</dbReference>
<dbReference type="InterPro" id="IPR039356">
    <property type="entry name" value="YfbR/HDDC2"/>
</dbReference>
<dbReference type="PANTHER" id="PTHR11845">
    <property type="entry name" value="5'-DEOXYNUCLEOTIDASE HDDC2"/>
    <property type="match status" value="1"/>
</dbReference>
<dbReference type="PANTHER" id="PTHR11845:SF13">
    <property type="entry name" value="5'-DEOXYNUCLEOTIDASE HDDC2"/>
    <property type="match status" value="1"/>
</dbReference>
<dbReference type="Pfam" id="PF13023">
    <property type="entry name" value="HD_3"/>
    <property type="match status" value="1"/>
</dbReference>
<dbReference type="SMART" id="SM00471">
    <property type="entry name" value="HDc"/>
    <property type="match status" value="1"/>
</dbReference>
<dbReference type="SUPFAM" id="SSF109604">
    <property type="entry name" value="HD-domain/PDEase-like"/>
    <property type="match status" value="1"/>
</dbReference>
<dbReference type="PROSITE" id="PS51831">
    <property type="entry name" value="HD"/>
    <property type="match status" value="1"/>
</dbReference>
<feature type="initiator methionine" description="Removed" evidence="9">
    <location>
        <position position="1"/>
    </location>
</feature>
<feature type="chain" id="PRO_0000311389" description="5'-deoxynucleotidase HDDC2">
    <location>
        <begin position="2"/>
        <end position="204"/>
    </location>
</feature>
<feature type="domain" description="HD" evidence="2">
    <location>
        <begin position="46"/>
        <end position="148"/>
    </location>
</feature>
<feature type="binding site" evidence="7">
    <location>
        <position position="49"/>
    </location>
    <ligand>
        <name>a divalent metal cation</name>
        <dbReference type="ChEBI" id="CHEBI:60240"/>
        <label>1</label>
    </ligand>
</feature>
<feature type="binding site" evidence="7">
    <location>
        <position position="77"/>
    </location>
    <ligand>
        <name>a divalent metal cation</name>
        <dbReference type="ChEBI" id="CHEBI:60240"/>
        <label>1</label>
    </ligand>
</feature>
<feature type="binding site" evidence="7">
    <location>
        <position position="78"/>
    </location>
    <ligand>
        <name>a divalent metal cation</name>
        <dbReference type="ChEBI" id="CHEBI:60240"/>
        <label>1</label>
    </ligand>
</feature>
<feature type="binding site" evidence="8">
    <location>
        <position position="81"/>
    </location>
    <ligand>
        <name>a divalent metal cation</name>
        <dbReference type="ChEBI" id="CHEBI:60240"/>
        <label>2</label>
    </ligand>
</feature>
<feature type="binding site" evidence="8">
    <location>
        <position position="86"/>
    </location>
    <ligand>
        <name>a divalent metal cation</name>
        <dbReference type="ChEBI" id="CHEBI:60240"/>
        <label>2</label>
    </ligand>
</feature>
<feature type="binding site" evidence="8">
    <location>
        <position position="87"/>
    </location>
    <ligand>
        <name>a divalent metal cation</name>
        <dbReference type="ChEBI" id="CHEBI:60240"/>
        <label>2</label>
    </ligand>
</feature>
<feature type="binding site" evidence="7">
    <location>
        <position position="143"/>
    </location>
    <ligand>
        <name>a divalent metal cation</name>
        <dbReference type="ChEBI" id="CHEBI:60240"/>
        <label>1</label>
    </ligand>
</feature>
<feature type="modified residue" description="N-acetylalanine" evidence="9">
    <location>
        <position position="2"/>
    </location>
</feature>
<feature type="modified residue" description="Phosphoserine" evidence="10">
    <location>
        <position position="3"/>
    </location>
</feature>
<feature type="modified residue" description="Phosphoserine" evidence="10">
    <location>
        <position position="5"/>
    </location>
</feature>
<feature type="modified residue" description="Phosphoserine" evidence="10">
    <location>
        <position position="204"/>
    </location>
</feature>
<feature type="splice variant" id="VSP_029556" description="In isoform 2." evidence="6">
    <location>
        <begin position="70"/>
        <end position="103"/>
    </location>
</feature>
<feature type="splice variant" id="VSP_029557" description="In isoform 3." evidence="4 5">
    <original>CV</original>
    <variation>KL</variation>
    <location>
        <begin position="70"/>
        <end position="71"/>
    </location>
</feature>
<feature type="splice variant" id="VSP_029558" description="In isoform 3." evidence="4 5">
    <location>
        <begin position="72"/>
        <end position="204"/>
    </location>
</feature>
<feature type="sequence variant" id="VAR_037238" description="In dbSNP:rs12213371.">
    <original>R</original>
    <variation>C</variation>
    <location>
        <position position="64"/>
    </location>
</feature>
<feature type="sequence conflict" description="In Ref. 2; AAD34125." evidence="6" ref="2">
    <original>R</original>
    <variation>P</variation>
    <location>
        <position position="69"/>
    </location>
</feature>
<feature type="sequence conflict" description="In Ref. 5; AAH66332." evidence="6" ref="5">
    <original>Q</original>
    <variation>R</variation>
    <location>
        <position position="131"/>
    </location>
</feature>
<feature type="helix" evidence="11">
    <location>
        <begin position="14"/>
        <end position="25"/>
    </location>
</feature>
<feature type="helix" evidence="11">
    <location>
        <begin position="26"/>
        <end position="29"/>
    </location>
</feature>
<feature type="helix" evidence="11">
    <location>
        <begin position="33"/>
        <end position="36"/>
    </location>
</feature>
<feature type="turn" evidence="11">
    <location>
        <begin position="37"/>
        <end position="39"/>
    </location>
</feature>
<feature type="helix" evidence="11">
    <location>
        <begin position="46"/>
        <end position="59"/>
    </location>
</feature>
<feature type="helix" evidence="11">
    <location>
        <begin position="67"/>
        <end position="76"/>
    </location>
</feature>
<feature type="turn" evidence="11">
    <location>
        <begin position="77"/>
        <end position="80"/>
    </location>
</feature>
<feature type="helix" evidence="11">
    <location>
        <begin position="81"/>
        <end position="84"/>
    </location>
</feature>
<feature type="helix" evidence="11">
    <location>
        <begin position="89"/>
        <end position="91"/>
    </location>
</feature>
<feature type="helix" evidence="11">
    <location>
        <begin position="95"/>
        <end position="110"/>
    </location>
</feature>
<feature type="helix" evidence="11">
    <location>
        <begin position="115"/>
        <end position="130"/>
    </location>
</feature>
<feature type="helix" evidence="11">
    <location>
        <begin position="134"/>
        <end position="158"/>
    </location>
</feature>
<feature type="turn" evidence="11">
    <location>
        <begin position="161"/>
        <end position="164"/>
    </location>
</feature>
<feature type="helix" evidence="11">
    <location>
        <begin position="165"/>
        <end position="171"/>
    </location>
</feature>
<feature type="helix" evidence="11">
    <location>
        <begin position="178"/>
        <end position="199"/>
    </location>
</feature>
<evidence type="ECO:0000250" key="1">
    <source>
        <dbReference type="UniProtKB" id="P53144"/>
    </source>
</evidence>
<evidence type="ECO:0000255" key="2">
    <source>
        <dbReference type="PROSITE-ProRule" id="PRU01175"/>
    </source>
</evidence>
<evidence type="ECO:0000269" key="3">
    <source ref="9"/>
</evidence>
<evidence type="ECO:0000303" key="4">
    <source>
    </source>
</evidence>
<evidence type="ECO:0000303" key="5">
    <source>
    </source>
</evidence>
<evidence type="ECO:0000305" key="6"/>
<evidence type="ECO:0007744" key="7">
    <source>
        <dbReference type="PDB" id="4DMB"/>
    </source>
</evidence>
<evidence type="ECO:0007744" key="8">
    <source>
        <dbReference type="PDB" id="4L7W"/>
    </source>
</evidence>
<evidence type="ECO:0007744" key="9">
    <source>
    </source>
</evidence>
<evidence type="ECO:0007744" key="10">
    <source>
    </source>
</evidence>
<evidence type="ECO:0007829" key="11">
    <source>
        <dbReference type="PDB" id="4L1J"/>
    </source>
</evidence>
<proteinExistence type="evidence at protein level"/>
<protein>
    <recommendedName>
        <fullName evidence="6">5'-deoxynucleotidase HDDC2</fullName>
        <ecNumber evidence="1">3.1.3.89</ecNumber>
    </recommendedName>
    <alternativeName>
        <fullName>HD domain-containing protein 2</fullName>
    </alternativeName>
    <alternativeName>
        <fullName>Hepatitis C virus NS5A-transactivated protein 2</fullName>
        <shortName>HCV NS5A-transactivated protein 2</shortName>
    </alternativeName>
</protein>